<accession>D0NB60</accession>
<gene>
    <name type="ORF">PITG_09218</name>
</gene>
<dbReference type="EMBL" id="DS028131">
    <property type="protein sequence ID" value="EEY55289.1"/>
    <property type="molecule type" value="Genomic_DNA"/>
</dbReference>
<dbReference type="RefSeq" id="XP_002903513.1">
    <property type="nucleotide sequence ID" value="XM_002903467.1"/>
</dbReference>
<dbReference type="EnsemblProtists" id="PITG_09218T0">
    <property type="protein sequence ID" value="PITG_09218T0"/>
    <property type="gene ID" value="PITG_09218"/>
</dbReference>
<dbReference type="GeneID" id="9470544"/>
<dbReference type="KEGG" id="pif:PITG_09218"/>
<dbReference type="VEuPathDB" id="FungiDB:PITG_09218"/>
<dbReference type="eggNOG" id="ENOG502RFFE">
    <property type="taxonomic scope" value="Eukaryota"/>
</dbReference>
<dbReference type="HOGENOM" id="CLU_130688_0_0_1"/>
<dbReference type="InParanoid" id="D0NB60"/>
<dbReference type="OMA" id="MMATTVQ"/>
<dbReference type="OrthoDB" id="116496at2759"/>
<dbReference type="Proteomes" id="UP000006643">
    <property type="component" value="Partially assembled WGS sequence"/>
</dbReference>
<dbReference type="GO" id="GO:0005576">
    <property type="term" value="C:extracellular region"/>
    <property type="evidence" value="ECO:0007669"/>
    <property type="project" value="UniProtKB-SubCell"/>
</dbReference>
<dbReference type="GO" id="GO:0044167">
    <property type="term" value="C:host cell endoplasmic reticulum membrane"/>
    <property type="evidence" value="ECO:0007669"/>
    <property type="project" value="UniProtKB-SubCell"/>
</dbReference>
<dbReference type="GO" id="GO:0044191">
    <property type="term" value="C:host cell mitochondrial membrane"/>
    <property type="evidence" value="ECO:0007669"/>
    <property type="project" value="UniProtKB-SubCell"/>
</dbReference>
<dbReference type="GO" id="GO:0016020">
    <property type="term" value="C:membrane"/>
    <property type="evidence" value="ECO:0007669"/>
    <property type="project" value="UniProtKB-KW"/>
</dbReference>
<sequence>MRFSAFLTLLLVAFVASCSTFASAESVAEGRRLRADAAPVPVNKDNVAKLAGGFLEKLKTNTALTKAANTIKNSNADEAAVRKAITTFAAAKESAKMSDEGIAKISAMMAGTVQKNPKSWPRLRKFAKVTLGATVAGFAIYGAYKALFDRKSSTAATTTTTTGSA</sequence>
<name>RXLRH_PHYIT</name>
<proteinExistence type="evidence at transcript level"/>
<feature type="signal peptide" evidence="1">
    <location>
        <begin position="1"/>
        <end position="24"/>
    </location>
</feature>
<feature type="chain" id="PRO_5003011869" description="RxLR effector protein PITG_09218">
    <location>
        <begin position="25"/>
        <end position="165"/>
    </location>
</feature>
<feature type="transmembrane region" description="Helical" evidence="1">
    <location>
        <begin position="129"/>
        <end position="149"/>
    </location>
</feature>
<feature type="short sequence motif" description="RxLR-dEER" evidence="8">
    <location>
        <begin position="31"/>
        <end position="57"/>
    </location>
</feature>
<keyword id="KW-1038">Host endoplasmic reticulum</keyword>
<keyword id="KW-1043">Host membrane</keyword>
<keyword id="KW-1045">Host mitochondrion</keyword>
<keyword id="KW-0472">Membrane</keyword>
<keyword id="KW-1185">Reference proteome</keyword>
<keyword id="KW-0964">Secreted</keyword>
<keyword id="KW-0732">Signal</keyword>
<keyword id="KW-0812">Transmembrane</keyword>
<keyword id="KW-1133">Transmembrane helix</keyword>
<keyword id="KW-0843">Virulence</keyword>
<protein>
    <recommendedName>
        <fullName evidence="6">RxLR effector protein PITG_09218</fullName>
    </recommendedName>
</protein>
<reference key="1">
    <citation type="journal article" date="2009" name="Nature">
        <title>Genome sequence and analysis of the Irish potato famine pathogen Phytophthora infestans.</title>
        <authorList>
            <consortium name="The Broad Institute Genome Sequencing Platform"/>
            <person name="Haas B.J."/>
            <person name="Kamoun S."/>
            <person name="Zody M.C."/>
            <person name="Jiang R.H."/>
            <person name="Handsaker R.E."/>
            <person name="Cano L.M."/>
            <person name="Grabherr M."/>
            <person name="Kodira C.D."/>
            <person name="Raffaele S."/>
            <person name="Torto-Alalibo T."/>
            <person name="Bozkurt T.O."/>
            <person name="Ah-Fong A.M."/>
            <person name="Alvarado L."/>
            <person name="Anderson V.L."/>
            <person name="Armstrong M.R."/>
            <person name="Avrova A."/>
            <person name="Baxter L."/>
            <person name="Beynon J."/>
            <person name="Boevink P.C."/>
            <person name="Bollmann S.R."/>
            <person name="Bos J.I."/>
            <person name="Bulone V."/>
            <person name="Cai G."/>
            <person name="Cakir C."/>
            <person name="Carrington J.C."/>
            <person name="Chawner M."/>
            <person name="Conti L."/>
            <person name="Costanzo S."/>
            <person name="Ewan R."/>
            <person name="Fahlgren N."/>
            <person name="Fischbach M.A."/>
            <person name="Fugelstad J."/>
            <person name="Gilroy E.M."/>
            <person name="Gnerre S."/>
            <person name="Green P.J."/>
            <person name="Grenville-Briggs L.J."/>
            <person name="Griffith J."/>
            <person name="Grunwald N.J."/>
            <person name="Horn K."/>
            <person name="Horner N.R."/>
            <person name="Hu C.H."/>
            <person name="Huitema E."/>
            <person name="Jeong D.H."/>
            <person name="Jones A.M."/>
            <person name="Jones J.D."/>
            <person name="Jones R.W."/>
            <person name="Karlsson E.K."/>
            <person name="Kunjeti S.G."/>
            <person name="Lamour K."/>
            <person name="Liu Z."/>
            <person name="Ma L."/>
            <person name="Maclean D."/>
            <person name="Chibucos M.C."/>
            <person name="McDonald H."/>
            <person name="McWalters J."/>
            <person name="Meijer H.J."/>
            <person name="Morgan W."/>
            <person name="Morris P.F."/>
            <person name="Munro C.A."/>
            <person name="O'Neill K."/>
            <person name="Ospina-Giraldo M."/>
            <person name="Pinzon A."/>
            <person name="Pritchard L."/>
            <person name="Ramsahoye B."/>
            <person name="Ren Q."/>
            <person name="Restrepo S."/>
            <person name="Roy S."/>
            <person name="Sadanandom A."/>
            <person name="Savidor A."/>
            <person name="Schornack S."/>
            <person name="Schwartz D.C."/>
            <person name="Schumann U.D."/>
            <person name="Schwessinger B."/>
            <person name="Seyer L."/>
            <person name="Sharpe T."/>
            <person name="Silvar C."/>
            <person name="Song J."/>
            <person name="Studholme D.J."/>
            <person name="Sykes S."/>
            <person name="Thines M."/>
            <person name="van de Vondervoort P.J."/>
            <person name="Phuntumart V."/>
            <person name="Wawra S."/>
            <person name="Weide R."/>
            <person name="Win J."/>
            <person name="Young C."/>
            <person name="Zhou S."/>
            <person name="Fry W."/>
            <person name="Meyers B.C."/>
            <person name="van West P."/>
            <person name="Ristaino J."/>
            <person name="Govers F."/>
            <person name="Birch P.R."/>
            <person name="Whisson S.C."/>
            <person name="Judelson H.S."/>
            <person name="Nusbaum C."/>
        </authorList>
    </citation>
    <scope>NUCLEOTIDE SEQUENCE [LARGE SCALE GENOMIC DNA]</scope>
    <scope>INDUCTION</scope>
    <source>
        <strain>T30-4</strain>
    </source>
</reference>
<reference key="2">
    <citation type="journal article" date="2017" name="BMC Genomics">
        <title>RNA-seq of life stages of the oomycete Phytophthora infestans reveals dynamic changes in metabolic, signal transduction, and pathogenesis genes and a major role for calcium signaling in development.</title>
        <authorList>
            <person name="Ah-Fong A.M."/>
            <person name="Kim K.S."/>
            <person name="Judelson H.S."/>
        </authorList>
    </citation>
    <scope>INDUCTION</scope>
</reference>
<reference key="3">
    <citation type="journal article" date="2017" name="Front. Plant Sci.">
        <title>Conserved RXLR effector genes of Phytophthora infestans expressed at the early stage of potato infection are suppressive to host defense.</title>
        <authorList>
            <person name="Yin J."/>
            <person name="Gu B."/>
            <person name="Huang G."/>
            <person name="Tian Y."/>
            <person name="Quan J."/>
            <person name="Lindqvist-Kreuze H."/>
            <person name="Shan W."/>
        </authorList>
    </citation>
    <scope>INDUCTION</scope>
    <scope>DOMAIN</scope>
</reference>
<reference key="4">
    <citation type="journal article" date="2019" name="J. Exp. Bot.">
        <title>Phytophthora infestans RXLR effectors act in concert at diverse subcellular locations to enhance host colonization.</title>
        <authorList>
            <person name="Wang S."/>
            <person name="McLellan H."/>
            <person name="Bukharova T."/>
            <person name="He Q."/>
            <person name="Murphy F."/>
            <person name="Shi J."/>
            <person name="Sun S."/>
            <person name="van Weymers P."/>
            <person name="Ren Y."/>
            <person name="Thilliez G."/>
            <person name="Wang H."/>
            <person name="Chen X."/>
            <person name="Engelhardt S."/>
            <person name="Vleeshouwers V."/>
            <person name="Gilroy E.M."/>
            <person name="Whisson S.C."/>
            <person name="Hein I."/>
            <person name="Wang X."/>
            <person name="Tian Z."/>
            <person name="Birch P.R.J."/>
            <person name="Boevink P.C."/>
        </authorList>
    </citation>
    <scope>FUNCTION</scope>
    <scope>SUBCELLULAR LOCATION</scope>
</reference>
<organism>
    <name type="scientific">Phytophthora infestans (strain T30-4)</name>
    <name type="common">Potato late blight agent</name>
    <dbReference type="NCBI Taxonomy" id="403677"/>
    <lineage>
        <taxon>Eukaryota</taxon>
        <taxon>Sar</taxon>
        <taxon>Stramenopiles</taxon>
        <taxon>Oomycota</taxon>
        <taxon>Peronosporales</taxon>
        <taxon>Peronosporaceae</taxon>
        <taxon>Phytophthora</taxon>
    </lineage>
</organism>
<evidence type="ECO:0000255" key="1"/>
<evidence type="ECO:0000269" key="2">
    <source>
    </source>
</evidence>
<evidence type="ECO:0000269" key="3">
    <source>
    </source>
</evidence>
<evidence type="ECO:0000269" key="4">
    <source>
    </source>
</evidence>
<evidence type="ECO:0000269" key="5">
    <source>
    </source>
</evidence>
<evidence type="ECO:0000303" key="6">
    <source>
    </source>
</evidence>
<evidence type="ECO:0000305" key="7"/>
<evidence type="ECO:0000305" key="8">
    <source>
    </source>
</evidence>
<comment type="function">
    <text evidence="5">Effector that enhances P.infestans colonization of Nicotiana benthamiana leaves.</text>
</comment>
<comment type="subcellular location">
    <subcellularLocation>
        <location evidence="5">Secreted</location>
    </subcellularLocation>
    <subcellularLocation>
        <location evidence="5">Host mitochondrion membrane</location>
        <topology evidence="1">Single-pass membrane protein</topology>
    </subcellularLocation>
    <subcellularLocation>
        <location evidence="5">Host endoplasmic reticulum membrane</location>
        <topology evidence="1">Single-pass membrane protein</topology>
    </subcellularLocation>
</comment>
<comment type="induction">
    <text evidence="2 3 4">Expression is induced during host plant infection.</text>
</comment>
<comment type="domain">
    <text evidence="8">The RxLR-dEER motif acts to carry the protein into the host cell cytoplasm through binding to cell surface phosphatidylinositol-3-phosphate.</text>
</comment>
<comment type="similarity">
    <text evidence="7">Belongs to the RxLR effector family.</text>
</comment>